<proteinExistence type="evidence at protein level"/>
<accession>Q9Z0E2</accession>
<sequence>MPSLPAPPAPRLLLGLLLLGSRPASGTGPEPPALPIRSEKEPLPVRGAAGCSFGGKVYALDETWHPDLGEPFGVMRCVLCACEAPQWARRGRGPGRVSCKNIKPQCPTLACRQPRQLPGHCCQTCPQERSNLDPQPAGLVFEYPRDPEHRSYSDRGEPGVGERTRADGHTDFVALLTGPRSQAVARARVSLLRSSLRFSVSYQRLDRPSRVRFTDPTGNILFEHPATPTQDGLVCGVWRAVPRLSVRLLRAEQLRVALVTSTHPSGEVWGPLIWQGALAAETFSAILTLEDPLQRGVGGIALLTLSDTEDSLHFLLLFRGLLGGLAQAPLKLQILHQGQLLRELQANTSAQEPGFAEVLPSLTDQEMDWLELGELQMVLEKAGGPELRISGYITTRQSCDVLQSVLCGADALIPVQTGAAGSASFILLGNGSLIYQVQVVGTGSEVVAMTLETKPQRKNQRTVLCHMAGLQPGGHMAVGMCSGLGARGAHMLLQNELFLNVGTKDFPDGELRGHVTALCYSGHSARYDRLPVPLAGALVLPPVRSQAAGHAWLSLDTHCHLHYEVLLAGLGGSEQGTVTAHLLGPPGMPGPQRLLKGFYGSEAQGVVKDLEPVLLRHLAQGTASLLITTKSSPRGELRGQVHIASQCEAGGLRLASEGVQMPLAPNGEAATSPMLPAGPGPEAPVPAKHGSPGRPRDPNTCFFEGQQRPHGARWAPNYDPLCSLCICQRRTVICDPVVCPPPSCPHPVQALDQCCPVCPEKQRSRDLPSLPNLEPGEGCYFDGDRSWRAAGTRWHPVVPPFGLIKCAVCTCKGATGEVHCEKVQCPRLACAQPVRANPTDCCKQCPVGSGTNAKLGDPMQADGPRGCRFAGQWFPENQSWHPSVPPFGEMSCITCRCGAGVPHCERDDCSPPLSCGSGKESRCCSHCTAQRSSETRTLPELEKEAEHS</sequence>
<dbReference type="EMBL" id="AF096276">
    <property type="protein sequence ID" value="AAD19895.1"/>
    <property type="molecule type" value="mRNA"/>
</dbReference>
<dbReference type="EMBL" id="AF069501">
    <property type="protein sequence ID" value="AAC68867.1"/>
    <property type="molecule type" value="mRNA"/>
</dbReference>
<dbReference type="CCDS" id="CCDS28059.1"/>
<dbReference type="RefSeq" id="NP_001264970.1">
    <property type="nucleotide sequence ID" value="NM_001278041.1"/>
</dbReference>
<dbReference type="RefSeq" id="NP_034023.1">
    <property type="nucleotide sequence ID" value="NM_009893.3"/>
</dbReference>
<dbReference type="FunCoup" id="Q9Z0E2">
    <property type="interactions" value="240"/>
</dbReference>
<dbReference type="STRING" id="10090.ENSMUSP00000007171"/>
<dbReference type="GlyCosmos" id="Q9Z0E2">
    <property type="glycosylation" value="3 sites, No reported glycans"/>
</dbReference>
<dbReference type="GlyGen" id="Q9Z0E2">
    <property type="glycosylation" value="3 sites"/>
</dbReference>
<dbReference type="PhosphoSitePlus" id="Q9Z0E2"/>
<dbReference type="PaxDb" id="10090-ENSMUSP00000007171"/>
<dbReference type="ProteomicsDB" id="279074"/>
<dbReference type="Antibodypedia" id="33823">
    <property type="antibodies" value="261 antibodies from 27 providers"/>
</dbReference>
<dbReference type="DNASU" id="12667"/>
<dbReference type="Ensembl" id="ENSMUST00000007171.13">
    <property type="protein sequence ID" value="ENSMUSP00000007171.7"/>
    <property type="gene ID" value="ENSMUSG00000006958.15"/>
</dbReference>
<dbReference type="GeneID" id="12667"/>
<dbReference type="KEGG" id="mmu:12667"/>
<dbReference type="UCSC" id="uc007yre.2">
    <property type="organism name" value="mouse"/>
</dbReference>
<dbReference type="AGR" id="MGI:1313268"/>
<dbReference type="CTD" id="8646"/>
<dbReference type="MGI" id="MGI:1313268">
    <property type="gene designation" value="Chrd"/>
</dbReference>
<dbReference type="VEuPathDB" id="HostDB:ENSMUSG00000006958"/>
<dbReference type="eggNOG" id="ENOG502QR4J">
    <property type="taxonomic scope" value="Eukaryota"/>
</dbReference>
<dbReference type="GeneTree" id="ENSGT00940000161767"/>
<dbReference type="HOGENOM" id="CLU_008477_0_0_1"/>
<dbReference type="InParanoid" id="Q9Z0E2"/>
<dbReference type="OrthoDB" id="9829321at2759"/>
<dbReference type="PhylomeDB" id="Q9Z0E2"/>
<dbReference type="TreeFam" id="TF106451"/>
<dbReference type="BioGRID-ORCS" id="12667">
    <property type="hits" value="0 hits in 76 CRISPR screens"/>
</dbReference>
<dbReference type="PRO" id="PR:Q9Z0E2"/>
<dbReference type="Proteomes" id="UP000000589">
    <property type="component" value="Chromosome 16"/>
</dbReference>
<dbReference type="RNAct" id="Q9Z0E2">
    <property type="molecule type" value="protein"/>
</dbReference>
<dbReference type="Bgee" id="ENSMUSG00000006958">
    <property type="expression patterns" value="Expressed in interphalangeal joint and 197 other cell types or tissues"/>
</dbReference>
<dbReference type="ExpressionAtlas" id="Q9Z0E2">
    <property type="expression patterns" value="baseline and differential"/>
</dbReference>
<dbReference type="GO" id="GO:0009986">
    <property type="term" value="C:cell surface"/>
    <property type="evidence" value="ECO:0000314"/>
    <property type="project" value="MGI"/>
</dbReference>
<dbReference type="GO" id="GO:0005576">
    <property type="term" value="C:extracellular region"/>
    <property type="evidence" value="ECO:0000314"/>
    <property type="project" value="MGI"/>
</dbReference>
<dbReference type="GO" id="GO:0005615">
    <property type="term" value="C:extracellular space"/>
    <property type="evidence" value="ECO:0000314"/>
    <property type="project" value="MGI"/>
</dbReference>
<dbReference type="GO" id="GO:0098793">
    <property type="term" value="C:presynapse"/>
    <property type="evidence" value="ECO:0007669"/>
    <property type="project" value="GOC"/>
</dbReference>
<dbReference type="GO" id="GO:0036122">
    <property type="term" value="F:BMP binding"/>
    <property type="evidence" value="ECO:0000314"/>
    <property type="project" value="MGI"/>
</dbReference>
<dbReference type="GO" id="GO:0043395">
    <property type="term" value="F:heparan sulfate proteoglycan binding"/>
    <property type="evidence" value="ECO:0000314"/>
    <property type="project" value="MGI"/>
</dbReference>
<dbReference type="GO" id="GO:0008201">
    <property type="term" value="F:heparin binding"/>
    <property type="evidence" value="ECO:0000314"/>
    <property type="project" value="MGI"/>
</dbReference>
<dbReference type="GO" id="GO:0045545">
    <property type="term" value="F:syndecan binding"/>
    <property type="evidence" value="ECO:0000314"/>
    <property type="project" value="MGI"/>
</dbReference>
<dbReference type="GO" id="GO:0048844">
    <property type="term" value="P:artery morphogenesis"/>
    <property type="evidence" value="ECO:0000315"/>
    <property type="project" value="MGI"/>
</dbReference>
<dbReference type="GO" id="GO:0030509">
    <property type="term" value="P:BMP signaling pathway"/>
    <property type="evidence" value="ECO:0000314"/>
    <property type="project" value="MGI"/>
</dbReference>
<dbReference type="GO" id="GO:0008283">
    <property type="term" value="P:cell population proliferation"/>
    <property type="evidence" value="ECO:0000316"/>
    <property type="project" value="MGI"/>
</dbReference>
<dbReference type="GO" id="GO:0007417">
    <property type="term" value="P:central nervous system development"/>
    <property type="evidence" value="ECO:0000315"/>
    <property type="project" value="MGI"/>
</dbReference>
<dbReference type="GO" id="GO:0160093">
    <property type="term" value="P:chordate pharynx development"/>
    <property type="evidence" value="ECO:0000315"/>
    <property type="project" value="MGI"/>
</dbReference>
<dbReference type="GO" id="GO:1904888">
    <property type="term" value="P:cranial skeletal system development"/>
    <property type="evidence" value="ECO:0000316"/>
    <property type="project" value="MGI"/>
</dbReference>
<dbReference type="GO" id="GO:0035906">
    <property type="term" value="P:descending aorta development"/>
    <property type="evidence" value="ECO:0000315"/>
    <property type="project" value="MGI"/>
</dbReference>
<dbReference type="GO" id="GO:0009953">
    <property type="term" value="P:dorsal/ventral pattern formation"/>
    <property type="evidence" value="ECO:0000315"/>
    <property type="project" value="MGI"/>
</dbReference>
<dbReference type="GO" id="GO:0000578">
    <property type="term" value="P:embryonic axis specification"/>
    <property type="evidence" value="ECO:0000314"/>
    <property type="project" value="MGI"/>
</dbReference>
<dbReference type="GO" id="GO:0035050">
    <property type="term" value="P:embryonic heart tube development"/>
    <property type="evidence" value="ECO:0000315"/>
    <property type="project" value="MGI"/>
</dbReference>
<dbReference type="GO" id="GO:0072148">
    <property type="term" value="P:epithelial cell fate commitment"/>
    <property type="evidence" value="ECO:0000314"/>
    <property type="project" value="MGI"/>
</dbReference>
<dbReference type="GO" id="GO:0035640">
    <property type="term" value="P:exploration behavior"/>
    <property type="evidence" value="ECO:0000315"/>
    <property type="project" value="MGI"/>
</dbReference>
<dbReference type="GO" id="GO:0008543">
    <property type="term" value="P:fibroblast growth factor receptor signaling pathway"/>
    <property type="evidence" value="ECO:0000316"/>
    <property type="project" value="MGI"/>
</dbReference>
<dbReference type="GO" id="GO:0030900">
    <property type="term" value="P:forebrain development"/>
    <property type="evidence" value="ECO:0000315"/>
    <property type="project" value="MGI"/>
</dbReference>
<dbReference type="GO" id="GO:0001702">
    <property type="term" value="P:gastrulation with mouth forming second"/>
    <property type="evidence" value="ECO:0000315"/>
    <property type="project" value="MGI"/>
</dbReference>
<dbReference type="GO" id="GO:0010467">
    <property type="term" value="P:gene expression"/>
    <property type="evidence" value="ECO:0000315"/>
    <property type="project" value="MGI"/>
</dbReference>
<dbReference type="GO" id="GO:0001701">
    <property type="term" value="P:in utero embryonic development"/>
    <property type="evidence" value="ECO:0000315"/>
    <property type="project" value="MGI"/>
</dbReference>
<dbReference type="GO" id="GO:0060291">
    <property type="term" value="P:long-term synaptic potentiation"/>
    <property type="evidence" value="ECO:0000315"/>
    <property type="project" value="MGI"/>
</dbReference>
<dbReference type="GO" id="GO:0045185">
    <property type="term" value="P:maintenance of protein location"/>
    <property type="evidence" value="ECO:0000314"/>
    <property type="project" value="MGI"/>
</dbReference>
<dbReference type="GO" id="GO:0014030">
    <property type="term" value="P:mesenchymal cell fate commitment"/>
    <property type="evidence" value="ECO:0000314"/>
    <property type="project" value="MGI"/>
</dbReference>
<dbReference type="GO" id="GO:0001707">
    <property type="term" value="P:mesoderm formation"/>
    <property type="evidence" value="ECO:0000315"/>
    <property type="project" value="MGI"/>
</dbReference>
<dbReference type="GO" id="GO:0030514">
    <property type="term" value="P:negative regulation of BMP signaling pathway"/>
    <property type="evidence" value="ECO:0000314"/>
    <property type="project" value="MGI"/>
</dbReference>
<dbReference type="GO" id="GO:0045668">
    <property type="term" value="P:negative regulation of osteoblast differentiation"/>
    <property type="evidence" value="ECO:0000314"/>
    <property type="project" value="MGI"/>
</dbReference>
<dbReference type="GO" id="GO:0014029">
    <property type="term" value="P:neural crest formation"/>
    <property type="evidence" value="ECO:0000315"/>
    <property type="project" value="MGI"/>
</dbReference>
<dbReference type="GO" id="GO:0048663">
    <property type="term" value="P:neuron fate commitment"/>
    <property type="evidence" value="ECO:0000314"/>
    <property type="project" value="MGI"/>
</dbReference>
<dbReference type="GO" id="GO:0001649">
    <property type="term" value="P:osteoblast differentiation"/>
    <property type="evidence" value="ECO:0000314"/>
    <property type="project" value="MGI"/>
</dbReference>
<dbReference type="GO" id="GO:0007389">
    <property type="term" value="P:pattern specification process"/>
    <property type="evidence" value="ECO:0000315"/>
    <property type="project" value="MGI"/>
</dbReference>
<dbReference type="GO" id="GO:0099171">
    <property type="term" value="P:presynaptic modulation of chemical synaptic transmission"/>
    <property type="evidence" value="ECO:0000315"/>
    <property type="project" value="MGI"/>
</dbReference>
<dbReference type="GO" id="GO:0017038">
    <property type="term" value="P:protein import"/>
    <property type="evidence" value="ECO:0000314"/>
    <property type="project" value="MGI"/>
</dbReference>
<dbReference type="GO" id="GO:0048168">
    <property type="term" value="P:regulation of neuronal synaptic plasticity"/>
    <property type="evidence" value="ECO:0000315"/>
    <property type="project" value="MGI"/>
</dbReference>
<dbReference type="GO" id="GO:1990926">
    <property type="term" value="P:short-term synaptic potentiation"/>
    <property type="evidence" value="ECO:0000315"/>
    <property type="project" value="MGI"/>
</dbReference>
<dbReference type="GO" id="GO:0001501">
    <property type="term" value="P:skeletal system development"/>
    <property type="evidence" value="ECO:0000315"/>
    <property type="project" value="MGI"/>
</dbReference>
<dbReference type="GO" id="GO:0007224">
    <property type="term" value="P:smoothened signaling pathway"/>
    <property type="evidence" value="ECO:0000316"/>
    <property type="project" value="MGI"/>
</dbReference>
<dbReference type="GO" id="GO:0042305">
    <property type="term" value="P:specification of segmental identity, mandibular segment"/>
    <property type="evidence" value="ECO:0000316"/>
    <property type="project" value="MGI"/>
</dbReference>
<dbReference type="GO" id="GO:0050808">
    <property type="term" value="P:synapse organization"/>
    <property type="evidence" value="ECO:0000315"/>
    <property type="project" value="MGI"/>
</dbReference>
<dbReference type="GO" id="GO:0048845">
    <property type="term" value="P:venous blood vessel morphogenesis"/>
    <property type="evidence" value="ECO:0000315"/>
    <property type="project" value="MGI"/>
</dbReference>
<dbReference type="GO" id="GO:0008542">
    <property type="term" value="P:visual learning"/>
    <property type="evidence" value="ECO:0000315"/>
    <property type="project" value="MGI"/>
</dbReference>
<dbReference type="Gene3D" id="6.20.200.20">
    <property type="match status" value="1"/>
</dbReference>
<dbReference type="InterPro" id="IPR016353">
    <property type="entry name" value="Chordin"/>
</dbReference>
<dbReference type="InterPro" id="IPR052278">
    <property type="entry name" value="Chordin-like_regulators"/>
</dbReference>
<dbReference type="InterPro" id="IPR010895">
    <property type="entry name" value="CHRD"/>
</dbReference>
<dbReference type="InterPro" id="IPR001007">
    <property type="entry name" value="VWF_dom"/>
</dbReference>
<dbReference type="PANTHER" id="PTHR46526">
    <property type="entry name" value="CHORDIN"/>
    <property type="match status" value="1"/>
</dbReference>
<dbReference type="PANTHER" id="PTHR46526:SF1">
    <property type="entry name" value="CHORDIN"/>
    <property type="match status" value="1"/>
</dbReference>
<dbReference type="Pfam" id="PF07452">
    <property type="entry name" value="CHRD"/>
    <property type="match status" value="3"/>
</dbReference>
<dbReference type="Pfam" id="PF00093">
    <property type="entry name" value="VWC"/>
    <property type="match status" value="3"/>
</dbReference>
<dbReference type="PIRSF" id="PIRSF002496">
    <property type="entry name" value="Chordin"/>
    <property type="match status" value="1"/>
</dbReference>
<dbReference type="SMART" id="SM00754">
    <property type="entry name" value="CHRD"/>
    <property type="match status" value="4"/>
</dbReference>
<dbReference type="SMART" id="SM00214">
    <property type="entry name" value="VWC"/>
    <property type="match status" value="4"/>
</dbReference>
<dbReference type="SUPFAM" id="SSF57603">
    <property type="entry name" value="FnI-like domain"/>
    <property type="match status" value="4"/>
</dbReference>
<dbReference type="PROSITE" id="PS50933">
    <property type="entry name" value="CHRD"/>
    <property type="match status" value="4"/>
</dbReference>
<dbReference type="PROSITE" id="PS01208">
    <property type="entry name" value="VWFC_1"/>
    <property type="match status" value="2"/>
</dbReference>
<dbReference type="PROSITE" id="PS50184">
    <property type="entry name" value="VWFC_2"/>
    <property type="match status" value="2"/>
</dbReference>
<reference key="1">
    <citation type="submission" date="1998-10" db="EMBL/GenBank/DDBJ databases">
        <title>BMP-binding domains in the chordin secreted protein.</title>
        <authorList>
            <person name="Lu B."/>
            <person name="Bachiller D."/>
            <person name="Agius E."/>
            <person name="Piccolo S."/>
            <person name="De Robertis E.M."/>
        </authorList>
    </citation>
    <scope>NUCLEOTIDE SEQUENCE [MRNA]</scope>
    <source>
        <strain>B6SJL/F1</strain>
    </source>
</reference>
<reference key="2">
    <citation type="journal article" date="1998" name="Genomics">
        <title>Coding sequence and expression patterns of mouse chordin and mapping of the cognate mouse chrd and human CHRD genes.</title>
        <authorList>
            <person name="Pappano W.N."/>
            <person name="Scott I.C."/>
            <person name="Clark T.G."/>
            <person name="Eddy R.L."/>
            <person name="Shows T.B."/>
            <person name="Greenspan D.S."/>
        </authorList>
    </citation>
    <scope>NUCLEOTIDE SEQUENCE [MRNA]</scope>
    <scope>DEVELOPMENTAL STAGE</scope>
</reference>
<reference key="3">
    <citation type="journal article" date="2001" name="Nature">
        <title>Homologues of Twisted gastrulation are extracellular cofactors in antagonism of BMP signalling.</title>
        <authorList>
            <person name="Scott I.C."/>
            <person name="Blitz I.L."/>
            <person name="Pappano W.N."/>
            <person name="Maas S.A."/>
            <person name="Cho K.W.Y."/>
            <person name="Greenspan D.S."/>
        </authorList>
    </citation>
    <scope>INTERACTION WITH TWSG1 AND BMP4</scope>
</reference>
<feature type="signal peptide" evidence="2">
    <location>
        <begin position="1"/>
        <end position="26"/>
    </location>
</feature>
<feature type="chain" id="PRO_0000005365" description="Chordin">
    <location>
        <begin position="27"/>
        <end position="948"/>
    </location>
</feature>
<feature type="domain" description="VWFC 1" evidence="3">
    <location>
        <begin position="49"/>
        <end position="126"/>
    </location>
</feature>
<feature type="domain" description="CHRD 1" evidence="4">
    <location>
        <begin position="168"/>
        <end position="277"/>
    </location>
</feature>
<feature type="domain" description="CHRD 2" evidence="4">
    <location>
        <begin position="279"/>
        <end position="398"/>
    </location>
</feature>
<feature type="domain" description="CHRD 3" evidence="4">
    <location>
        <begin position="399"/>
        <end position="520"/>
    </location>
</feature>
<feature type="domain" description="CHRD 4" evidence="4">
    <location>
        <begin position="526"/>
        <end position="646"/>
    </location>
</feature>
<feature type="domain" description="VWFC 2" evidence="3">
    <location>
        <begin position="699"/>
        <end position="759"/>
    </location>
</feature>
<feature type="domain" description="VWFC 3" evidence="3">
    <location>
        <begin position="779"/>
        <end position="845"/>
    </location>
</feature>
<feature type="domain" description="VWFC 4" evidence="3">
    <location>
        <begin position="867"/>
        <end position="927"/>
    </location>
</feature>
<feature type="region of interest" description="Disordered" evidence="5">
    <location>
        <begin position="143"/>
        <end position="165"/>
    </location>
</feature>
<feature type="region of interest" description="Disordered" evidence="5">
    <location>
        <begin position="665"/>
        <end position="697"/>
    </location>
</feature>
<feature type="glycosylation site" description="N-linked (GlcNAc...) asparagine" evidence="2">
    <location>
        <position position="347"/>
    </location>
</feature>
<feature type="glycosylation site" description="N-linked (GlcNAc...) asparagine" evidence="2">
    <location>
        <position position="430"/>
    </location>
</feature>
<feature type="glycosylation site" description="N-linked (GlcNAc...) asparagine" evidence="2">
    <location>
        <position position="877"/>
    </location>
</feature>
<gene>
    <name type="primary">Chrd</name>
</gene>
<evidence type="ECO:0000250" key="1"/>
<evidence type="ECO:0000255" key="2"/>
<evidence type="ECO:0000255" key="3">
    <source>
        <dbReference type="PROSITE-ProRule" id="PRU00220"/>
    </source>
</evidence>
<evidence type="ECO:0000255" key="4">
    <source>
        <dbReference type="PROSITE-ProRule" id="PRU00230"/>
    </source>
</evidence>
<evidence type="ECO:0000256" key="5">
    <source>
        <dbReference type="SAM" id="MobiDB-lite"/>
    </source>
</evidence>
<evidence type="ECO:0000269" key="6">
    <source>
    </source>
</evidence>
<evidence type="ECO:0000269" key="7">
    <source>
    </source>
</evidence>
<evidence type="ECO:0000305" key="8"/>
<protein>
    <recommendedName>
        <fullName>Chordin</fullName>
    </recommendedName>
</protein>
<comment type="function">
    <text>Dorsalizing factor. Key developmental protein that dorsalizes early vertebrate embryonic tissues by binding to ventralizing TGF-beta family bone morphogenetic proteins (BMPs) and sequestering them in latent complexes.</text>
</comment>
<comment type="subunit">
    <text evidence="6">Interacts with TWSG1 and/or BMP4.</text>
</comment>
<comment type="subcellular location">
    <subcellularLocation>
        <location evidence="1">Secreted</location>
    </subcellularLocation>
</comment>
<comment type="developmental stage">
    <text evidence="7">Detected at high levels in 7 dpc mouse embryos; its level decreases at later developmental stages and in adult tissues.</text>
</comment>
<comment type="PTM">
    <text evidence="1">Cleaved by tolloid proteases; cleavage participates in dorsoventral patterning during early development.</text>
</comment>
<comment type="similarity">
    <text evidence="8">Belongs to the chordin family.</text>
</comment>
<keyword id="KW-0217">Developmental protein</keyword>
<keyword id="KW-0325">Glycoprotein</keyword>
<keyword id="KW-1185">Reference proteome</keyword>
<keyword id="KW-0677">Repeat</keyword>
<keyword id="KW-0964">Secreted</keyword>
<keyword id="KW-0732">Signal</keyword>
<name>CHRD_MOUSE</name>
<organism>
    <name type="scientific">Mus musculus</name>
    <name type="common">Mouse</name>
    <dbReference type="NCBI Taxonomy" id="10090"/>
    <lineage>
        <taxon>Eukaryota</taxon>
        <taxon>Metazoa</taxon>
        <taxon>Chordata</taxon>
        <taxon>Craniata</taxon>
        <taxon>Vertebrata</taxon>
        <taxon>Euteleostomi</taxon>
        <taxon>Mammalia</taxon>
        <taxon>Eutheria</taxon>
        <taxon>Euarchontoglires</taxon>
        <taxon>Glires</taxon>
        <taxon>Rodentia</taxon>
        <taxon>Myomorpha</taxon>
        <taxon>Muroidea</taxon>
        <taxon>Muridae</taxon>
        <taxon>Murinae</taxon>
        <taxon>Mus</taxon>
        <taxon>Mus</taxon>
    </lineage>
</organism>